<accession>Q9DGB6</accession>
<name>TLR22_CHICK</name>
<keyword id="KW-1015">Disulfide bond</keyword>
<keyword id="KW-0325">Glycoprotein</keyword>
<keyword id="KW-0391">Immunity</keyword>
<keyword id="KW-0395">Inflammatory response</keyword>
<keyword id="KW-0399">Innate immunity</keyword>
<keyword id="KW-0433">Leucine-rich repeat</keyword>
<keyword id="KW-0472">Membrane</keyword>
<keyword id="KW-0520">NAD</keyword>
<keyword id="KW-0675">Receptor</keyword>
<keyword id="KW-1185">Reference proteome</keyword>
<keyword id="KW-0677">Repeat</keyword>
<keyword id="KW-0732">Signal</keyword>
<keyword id="KW-0812">Transmembrane</keyword>
<keyword id="KW-1133">Transmembrane helix</keyword>
<dbReference type="EMBL" id="AB046533">
    <property type="protein sequence ID" value="BAB16842.1"/>
    <property type="molecule type" value="mRNA"/>
</dbReference>
<dbReference type="RefSeq" id="NP_001155122.1">
    <property type="nucleotide sequence ID" value="NM_001161650.1"/>
</dbReference>
<dbReference type="SMR" id="Q9DGB6"/>
<dbReference type="FunCoup" id="Q9DGB6">
    <property type="interactions" value="117"/>
</dbReference>
<dbReference type="STRING" id="9031.ENSGALP00000038134"/>
<dbReference type="GlyCosmos" id="Q9DGB6">
    <property type="glycosylation" value="8 sites, No reported glycans"/>
</dbReference>
<dbReference type="GlyGen" id="Q9DGB6">
    <property type="glycosylation" value="8 sites"/>
</dbReference>
<dbReference type="PaxDb" id="9031-ENSGALP00000038134"/>
<dbReference type="Ensembl" id="ENSGALT00010035770.1">
    <property type="protein sequence ID" value="ENSGALP00010020743.1"/>
    <property type="gene ID" value="ENSGALG00010014865.1"/>
</dbReference>
<dbReference type="Ensembl" id="ENSGALT00010035774.1">
    <property type="protein sequence ID" value="ENSGALP00010020745.1"/>
    <property type="gene ID" value="ENSGALG00010014865.1"/>
</dbReference>
<dbReference type="Ensembl" id="ENSGALT00010035778.1">
    <property type="protein sequence ID" value="ENSGALP00010020746.1"/>
    <property type="gene ID" value="ENSGALG00010014865.1"/>
</dbReference>
<dbReference type="Ensembl" id="ENSGALT00010035781.1">
    <property type="protein sequence ID" value="ENSGALP00010020748.1"/>
    <property type="gene ID" value="ENSGALG00010014865.1"/>
</dbReference>
<dbReference type="Ensembl" id="ENSGALT00010035786.1">
    <property type="protein sequence ID" value="ENSGALP00010020751.1"/>
    <property type="gene ID" value="ENSGALG00010014865.1"/>
</dbReference>
<dbReference type="GeneID" id="769014"/>
<dbReference type="KEGG" id="gga:769014"/>
<dbReference type="CTD" id="7097"/>
<dbReference type="VEuPathDB" id="HostDB:geneid_769014"/>
<dbReference type="eggNOG" id="KOG4641">
    <property type="taxonomic scope" value="Eukaryota"/>
</dbReference>
<dbReference type="GeneTree" id="ENSGT00940000156323"/>
<dbReference type="InParanoid" id="Q9DGB6"/>
<dbReference type="OMA" id="SCNCSRQ"/>
<dbReference type="OrthoDB" id="1081807at2759"/>
<dbReference type="PhylomeDB" id="Q9DGB6"/>
<dbReference type="PRO" id="PR:Q9DGB6"/>
<dbReference type="Proteomes" id="UP000000539">
    <property type="component" value="Chromosome 4"/>
</dbReference>
<dbReference type="GO" id="GO:0005886">
    <property type="term" value="C:plasma membrane"/>
    <property type="evidence" value="ECO:0000318"/>
    <property type="project" value="GO_Central"/>
</dbReference>
<dbReference type="GO" id="GO:0043235">
    <property type="term" value="C:receptor complex"/>
    <property type="evidence" value="ECO:0000318"/>
    <property type="project" value="GO_Central"/>
</dbReference>
<dbReference type="GO" id="GO:0061809">
    <property type="term" value="F:NAD+ nucleosidase activity, cyclic ADP-ribose generating"/>
    <property type="evidence" value="ECO:0007669"/>
    <property type="project" value="UniProtKB-EC"/>
</dbReference>
<dbReference type="GO" id="GO:0038023">
    <property type="term" value="F:signaling receptor activity"/>
    <property type="evidence" value="ECO:0000318"/>
    <property type="project" value="GO_Central"/>
</dbReference>
<dbReference type="GO" id="GO:0004888">
    <property type="term" value="F:transmembrane signaling receptor activity"/>
    <property type="evidence" value="ECO:0007669"/>
    <property type="project" value="InterPro"/>
</dbReference>
<dbReference type="GO" id="GO:0042497">
    <property type="term" value="F:triacyl lipopeptide binding"/>
    <property type="evidence" value="ECO:0000318"/>
    <property type="project" value="GO_Central"/>
</dbReference>
<dbReference type="GO" id="GO:0042494">
    <property type="term" value="P:detection of bacterial lipoprotein"/>
    <property type="evidence" value="ECO:0000303"/>
    <property type="project" value="Roslin"/>
</dbReference>
<dbReference type="GO" id="GO:0006954">
    <property type="term" value="P:inflammatory response"/>
    <property type="evidence" value="ECO:0000318"/>
    <property type="project" value="GO_Central"/>
</dbReference>
<dbReference type="GO" id="GO:0045087">
    <property type="term" value="P:innate immune response"/>
    <property type="evidence" value="ECO:0007669"/>
    <property type="project" value="UniProtKB-KW"/>
</dbReference>
<dbReference type="GO" id="GO:0002224">
    <property type="term" value="P:toll-like receptor signaling pathway"/>
    <property type="evidence" value="ECO:0000318"/>
    <property type="project" value="GO_Central"/>
</dbReference>
<dbReference type="FunFam" id="3.40.50.10140:FF:000001">
    <property type="entry name" value="Toll-like receptor 2"/>
    <property type="match status" value="1"/>
</dbReference>
<dbReference type="FunFam" id="3.80.10.10:FF:000046">
    <property type="entry name" value="Toll-like receptor 2"/>
    <property type="match status" value="1"/>
</dbReference>
<dbReference type="Gene3D" id="3.80.10.10">
    <property type="entry name" value="Ribonuclease Inhibitor"/>
    <property type="match status" value="1"/>
</dbReference>
<dbReference type="Gene3D" id="3.40.50.10140">
    <property type="entry name" value="Toll/interleukin-1 receptor homology (TIR) domain"/>
    <property type="match status" value="1"/>
</dbReference>
<dbReference type="InterPro" id="IPR000483">
    <property type="entry name" value="Cys-rich_flank_reg_C"/>
</dbReference>
<dbReference type="InterPro" id="IPR018247">
    <property type="entry name" value="EF_Hand_1_Ca_BS"/>
</dbReference>
<dbReference type="InterPro" id="IPR001611">
    <property type="entry name" value="Leu-rich_rpt"/>
</dbReference>
<dbReference type="InterPro" id="IPR003591">
    <property type="entry name" value="Leu-rich_rpt_typical-subtyp"/>
</dbReference>
<dbReference type="InterPro" id="IPR032675">
    <property type="entry name" value="LRR_dom_sf"/>
</dbReference>
<dbReference type="InterPro" id="IPR000157">
    <property type="entry name" value="TIR_dom"/>
</dbReference>
<dbReference type="InterPro" id="IPR017241">
    <property type="entry name" value="Toll-like_receptor"/>
</dbReference>
<dbReference type="InterPro" id="IPR035897">
    <property type="entry name" value="Toll_tir_struct_dom_sf"/>
</dbReference>
<dbReference type="PANTHER" id="PTHR24365">
    <property type="entry name" value="TOLL-LIKE RECEPTOR"/>
    <property type="match status" value="1"/>
</dbReference>
<dbReference type="PANTHER" id="PTHR24365:SF17">
    <property type="entry name" value="TOLL-LIKE RECEPTOR 2"/>
    <property type="match status" value="1"/>
</dbReference>
<dbReference type="Pfam" id="PF13855">
    <property type="entry name" value="LRR_8"/>
    <property type="match status" value="3"/>
</dbReference>
<dbReference type="Pfam" id="PF01582">
    <property type="entry name" value="TIR"/>
    <property type="match status" value="1"/>
</dbReference>
<dbReference type="PIRSF" id="PIRSF037595">
    <property type="entry name" value="Toll-like_receptor"/>
    <property type="match status" value="1"/>
</dbReference>
<dbReference type="PRINTS" id="PR01537">
    <property type="entry name" value="INTRLKN1R1F"/>
</dbReference>
<dbReference type="PRINTS" id="PR00019">
    <property type="entry name" value="LEURICHRPT"/>
</dbReference>
<dbReference type="SMART" id="SM00364">
    <property type="entry name" value="LRR_BAC"/>
    <property type="match status" value="4"/>
</dbReference>
<dbReference type="SMART" id="SM00369">
    <property type="entry name" value="LRR_TYP"/>
    <property type="match status" value="7"/>
</dbReference>
<dbReference type="SMART" id="SM00082">
    <property type="entry name" value="LRRCT"/>
    <property type="match status" value="1"/>
</dbReference>
<dbReference type="SMART" id="SM00255">
    <property type="entry name" value="TIR"/>
    <property type="match status" value="1"/>
</dbReference>
<dbReference type="SUPFAM" id="SSF52058">
    <property type="entry name" value="L domain-like"/>
    <property type="match status" value="3"/>
</dbReference>
<dbReference type="SUPFAM" id="SSF52200">
    <property type="entry name" value="Toll/Interleukin receptor TIR domain"/>
    <property type="match status" value="1"/>
</dbReference>
<dbReference type="PROSITE" id="PS51450">
    <property type="entry name" value="LRR"/>
    <property type="match status" value="11"/>
</dbReference>
<dbReference type="PROSITE" id="PS50104">
    <property type="entry name" value="TIR"/>
    <property type="match status" value="1"/>
</dbReference>
<organism>
    <name type="scientific">Gallus gallus</name>
    <name type="common">Chicken</name>
    <dbReference type="NCBI Taxonomy" id="9031"/>
    <lineage>
        <taxon>Eukaryota</taxon>
        <taxon>Metazoa</taxon>
        <taxon>Chordata</taxon>
        <taxon>Craniata</taxon>
        <taxon>Vertebrata</taxon>
        <taxon>Euteleostomi</taxon>
        <taxon>Archelosauria</taxon>
        <taxon>Archosauria</taxon>
        <taxon>Dinosauria</taxon>
        <taxon>Saurischia</taxon>
        <taxon>Theropoda</taxon>
        <taxon>Coelurosauria</taxon>
        <taxon>Aves</taxon>
        <taxon>Neognathae</taxon>
        <taxon>Galloanserae</taxon>
        <taxon>Galliformes</taxon>
        <taxon>Phasianidae</taxon>
        <taxon>Phasianinae</taxon>
        <taxon>Gallus</taxon>
    </lineage>
</organism>
<feature type="signal peptide" evidence="3">
    <location>
        <begin position="1"/>
        <end position="24"/>
    </location>
</feature>
<feature type="chain" id="PRO_0000034714" description="Toll-like receptor 2 type-2">
    <location>
        <begin position="25"/>
        <end position="781"/>
    </location>
</feature>
<feature type="topological domain" description="Extracellular" evidence="3">
    <location>
        <begin position="25"/>
        <end position="585"/>
    </location>
</feature>
<feature type="transmembrane region" description="Helical" evidence="3">
    <location>
        <begin position="586"/>
        <end position="606"/>
    </location>
</feature>
<feature type="topological domain" description="Cytoplasmic" evidence="3">
    <location>
        <begin position="607"/>
        <end position="781"/>
    </location>
</feature>
<feature type="repeat" description="LRR 1">
    <location>
        <begin position="53"/>
        <end position="74"/>
    </location>
</feature>
<feature type="repeat" description="LRR 2">
    <location>
        <begin position="77"/>
        <end position="98"/>
    </location>
</feature>
<feature type="repeat" description="LRR 3">
    <location>
        <begin position="101"/>
        <end position="122"/>
    </location>
</feature>
<feature type="repeat" description="LRR 4">
    <location>
        <begin position="125"/>
        <end position="146"/>
    </location>
</feature>
<feature type="repeat" description="LRR 5">
    <location>
        <begin position="150"/>
        <end position="171"/>
    </location>
</feature>
<feature type="repeat" description="LRR 6">
    <location>
        <begin position="174"/>
        <end position="195"/>
    </location>
</feature>
<feature type="repeat" description="LRR 7">
    <location>
        <begin position="358"/>
        <end position="378"/>
    </location>
</feature>
<feature type="repeat" description="LRR 8">
    <location>
        <begin position="385"/>
        <end position="406"/>
    </location>
</feature>
<feature type="repeat" description="LRR 9">
    <location>
        <begin position="411"/>
        <end position="432"/>
    </location>
</feature>
<feature type="repeat" description="LRR 10">
    <location>
        <begin position="434"/>
        <end position="455"/>
    </location>
</feature>
<feature type="repeat" description="LRR 11">
    <location>
        <begin position="456"/>
        <end position="474"/>
    </location>
</feature>
<feature type="repeat" description="LRR 12">
    <location>
        <begin position="475"/>
        <end position="496"/>
    </location>
</feature>
<feature type="repeat" description="LRR 13">
    <location>
        <begin position="497"/>
        <end position="518"/>
    </location>
</feature>
<feature type="domain" description="LRRCT">
    <location>
        <begin position="530"/>
        <end position="584"/>
    </location>
</feature>
<feature type="domain" description="TIR" evidence="4">
    <location>
        <begin position="636"/>
        <end position="779"/>
    </location>
</feature>
<feature type="glycosylation site" description="N-linked (GlcNAc...) asparagine" evidence="3">
    <location>
        <position position="37"/>
    </location>
</feature>
<feature type="glycosylation site" description="N-linked (GlcNAc...) asparagine" evidence="3">
    <location>
        <position position="109"/>
    </location>
</feature>
<feature type="glycosylation site" description="N-linked (GlcNAc...) asparagine" evidence="3">
    <location>
        <position position="150"/>
    </location>
</feature>
<feature type="glycosylation site" description="N-linked (GlcNAc...) asparagine" evidence="3">
    <location>
        <position position="184"/>
    </location>
</feature>
<feature type="glycosylation site" description="N-linked (GlcNAc...) asparagine" evidence="3">
    <location>
        <position position="301"/>
    </location>
</feature>
<feature type="glycosylation site" description="N-linked (GlcNAc...) asparagine" evidence="3">
    <location>
        <position position="313"/>
    </location>
</feature>
<feature type="glycosylation site" description="N-linked (GlcNAc...) asparagine" evidence="3">
    <location>
        <position position="390"/>
    </location>
</feature>
<feature type="glycosylation site" description="N-linked (GlcNAc...) asparagine" evidence="3">
    <location>
        <position position="439"/>
    </location>
</feature>
<feature type="disulfide bond" evidence="1">
    <location>
        <begin position="30"/>
        <end position="36"/>
    </location>
</feature>
<feature type="disulfide bond" evidence="1">
    <location>
        <begin position="350"/>
        <end position="379"/>
    </location>
</feature>
<feature type="disulfide bond" evidence="1">
    <location>
        <begin position="429"/>
        <end position="451"/>
    </location>
</feature>
<sequence length="781" mass="89095">MHTWKMWAICTALAAHLPEEQALRQACLSCDATQSCNCSFMGLDFIPPGLTGKITVLNLAHNRIKVIRTHDLQKAVNLRTLLLQSNQISSIDEDSFGSQGKLELLDLSNNSLAHLSPVWFGPLFSLQHLRIQGNSYSDLGESSPFSSLRNLSSLHLGNPQFSIIRQGNFEGIVFLNTLRIDGDNLSQYEPGSLKSIRKINHMIISIRRIDVFSAVIRDLLHSAIWLDVRKLAFSVPEKIQLLRIMSSSFAKKISLKQCLFTDATVPEIVSILEGMPKLMEVEMKDCTLLGTGKWYKQIHANQSQSLRILTIENLSIEEFYLFTDLQSVLDLLSLFRKVTVENTKVFLVPCKLSQHLLSLEYLDLSANLLGDQSLEHSACQGAWPSLQTLNLSQNSLSDLKMTGKSLFHLRNLNLLDISENNFGEIPDMCEWPENLKYLNLSSTQIPKLTTCIPSTLEVLDVSANNLQDFGLQLPFLKELYLTKNHLKTLPEATDIPNLVAMSISRNKLNSFSKEEFESFKQMELLDASANNFICSCEFLSFIHHEAGIAQVLVGWPESYICDSPLTVRGAQVGSVQLSLMECHRSLLVSLICTLVFLFILILVVVGYKYHAVWYMRMTWAWLQAKRKPKRAPTKDICYDAFVSYSENDSNWVENIMVQQLEQACPPFRLCLHKRDFVPGKWIVDNIIDSIEKSHKTLFVLSEHFVQSEWCKYELDFSHFRLFDENNDVAILILLEPIQSQAIPKRFCKLRKIMNTKTYLEWPPDEEQQQMFWENLKAALKS</sequence>
<protein>
    <recommendedName>
        <fullName>Toll-like receptor 2 type-2</fullName>
    </recommendedName>
</protein>
<gene>
    <name type="primary">TLR2-2</name>
</gene>
<comment type="function">
    <text>Participates in the innate immune response to microbial agents. Acts via MYD88 and TRAF6, leading to NF-kappa-B activation, cytokine secretion and the inflammatory response. Mediates the response to mycoplasmal macrophage-activating lipopeptide-2kD (MALP-2).</text>
</comment>
<comment type="subunit">
    <text evidence="1">Binds MYD88 (via TIR domain).</text>
</comment>
<comment type="subcellular location">
    <subcellularLocation>
        <location evidence="1">Membrane</location>
        <topology evidence="1">Single-pass type I membrane protein</topology>
    </subcellularLocation>
</comment>
<comment type="tissue specificity">
    <text>Highly expressed in ovary. Also detected in brain, heart, lung, liver, spleen and kidney, and at low levels in gizzard, muscle, testis and proventriculus.</text>
</comment>
<comment type="PTM">
    <text>N-glycosylated.</text>
</comment>
<comment type="similarity">
    <text evidence="5">Belongs to the Toll-like receptor family.</text>
</comment>
<comment type="caution">
    <text evidence="2 5">In some plant proteins and in human SARM1, the TIR domain has NAD(+) hydrolase (NADase) activity (By similarity). However, despite the presence of the catalytic Asp residue, the isolated TIR domain of human TLR4 lacks NADase activity (By similarity). Based on this, it is unlikely that Toll-like receptors have NADase activity.</text>
</comment>
<proteinExistence type="evidence at transcript level"/>
<reference key="1">
    <citation type="journal article" date="2001" name="J. Biol. Chem.">
        <title>Molecular cloning and functional characterization of chicken Toll-like receptors. A single chicken Toll covers multiple molecular patterns.</title>
        <authorList>
            <person name="Fukui A."/>
            <person name="Inoue N."/>
            <person name="Matsumoto M."/>
            <person name="Nomura M."/>
            <person name="Yamada K."/>
            <person name="Matsuda Y."/>
            <person name="Toyoshima K."/>
            <person name="Seya T."/>
        </authorList>
    </citation>
    <scope>NUCLEOTIDE SEQUENCE [MRNA]</scope>
    <source>
        <tissue>Liver</tissue>
    </source>
</reference>
<evidence type="ECO:0000250" key="1"/>
<evidence type="ECO:0000250" key="2">
    <source>
        <dbReference type="UniProtKB" id="O00206"/>
    </source>
</evidence>
<evidence type="ECO:0000255" key="3"/>
<evidence type="ECO:0000255" key="4">
    <source>
        <dbReference type="PROSITE-ProRule" id="PRU00204"/>
    </source>
</evidence>
<evidence type="ECO:0000305" key="5"/>